<keyword id="KW-0106">Calcium</keyword>
<keyword id="KW-0119">Carbohydrate metabolism</keyword>
<keyword id="KW-0868">Chloride</keyword>
<keyword id="KW-0222">Digestion</keyword>
<keyword id="KW-1015">Disulfide bond</keyword>
<keyword id="KW-0325">Glycoprotein</keyword>
<keyword id="KW-0326">Glycosidase</keyword>
<keyword id="KW-0378">Hydrolase</keyword>
<keyword id="KW-0479">Metal-binding</keyword>
<keyword id="KW-0873">Pyrrolidone carboxylic acid</keyword>
<keyword id="KW-0964">Secreted</keyword>
<keyword id="KW-0732">Signal</keyword>
<protein>
    <recommendedName>
        <fullName>Alpha-amylase</fullName>
        <ecNumber evidence="1">3.2.1.1</ecNumber>
    </recommendedName>
    <alternativeName>
        <fullName>1,4-alpha-D-glucan glucanohydrolase</fullName>
    </alternativeName>
</protein>
<name>AMY_PHACE</name>
<organism>
    <name type="scientific">Phaedon cochleariae</name>
    <name type="common">Mustard beetle</name>
    <dbReference type="NCBI Taxonomy" id="80249"/>
    <lineage>
        <taxon>Eukaryota</taxon>
        <taxon>Metazoa</taxon>
        <taxon>Ecdysozoa</taxon>
        <taxon>Arthropoda</taxon>
        <taxon>Hexapoda</taxon>
        <taxon>Insecta</taxon>
        <taxon>Pterygota</taxon>
        <taxon>Neoptera</taxon>
        <taxon>Endopterygota</taxon>
        <taxon>Coleoptera</taxon>
        <taxon>Polyphaga</taxon>
        <taxon>Cucujiformia</taxon>
        <taxon>Chrysomeloidea</taxon>
        <taxon>Chrysomelidae</taxon>
        <taxon>Chrysomelinae</taxon>
        <taxon>Chrysomelini</taxon>
        <taxon>Phaedon</taxon>
    </lineage>
</organism>
<proteinExistence type="evidence at transcript level"/>
<feature type="signal peptide" evidence="3">
    <location>
        <begin position="1"/>
        <end position="18"/>
    </location>
</feature>
<feature type="chain" id="PRO_5000147323" description="Alpha-amylase" evidence="3">
    <location>
        <begin position="19"/>
        <end position="485"/>
    </location>
</feature>
<feature type="active site" description="Nucleophile" evidence="2">
    <location>
        <position position="203"/>
    </location>
</feature>
<feature type="active site" description="Proton donor" evidence="2">
    <location>
        <position position="240"/>
    </location>
</feature>
<feature type="binding site" evidence="2">
    <location>
        <position position="116"/>
    </location>
    <ligand>
        <name>Ca(2+)</name>
        <dbReference type="ChEBI" id="CHEBI:29108"/>
    </ligand>
</feature>
<feature type="binding site" evidence="2">
    <location>
        <position position="164"/>
    </location>
    <ligand>
        <name>Ca(2+)</name>
        <dbReference type="ChEBI" id="CHEBI:29108"/>
    </ligand>
</feature>
<feature type="binding site" evidence="2">
    <location>
        <position position="173"/>
    </location>
    <ligand>
        <name>Ca(2+)</name>
        <dbReference type="ChEBI" id="CHEBI:29108"/>
    </ligand>
</feature>
<feature type="binding site" evidence="2">
    <location>
        <position position="201"/>
    </location>
    <ligand>
        <name>chloride</name>
        <dbReference type="ChEBI" id="CHEBI:17996"/>
    </ligand>
</feature>
<feature type="binding site" evidence="2">
    <location>
        <position position="207"/>
    </location>
    <ligand>
        <name>Ca(2+)</name>
        <dbReference type="ChEBI" id="CHEBI:29108"/>
    </ligand>
</feature>
<feature type="binding site" evidence="2">
    <location>
        <position position="303"/>
    </location>
    <ligand>
        <name>chloride</name>
        <dbReference type="ChEBI" id="CHEBI:17996"/>
    </ligand>
</feature>
<feature type="binding site" evidence="2">
    <location>
        <position position="339"/>
    </location>
    <ligand>
        <name>chloride</name>
        <dbReference type="ChEBI" id="CHEBI:17996"/>
    </ligand>
</feature>
<feature type="site" description="Transition state stabilizer" evidence="1">
    <location>
        <position position="305"/>
    </location>
</feature>
<feature type="modified residue" description="Pyrrolidone carboxylic acid" evidence="2">
    <location>
        <position position="19"/>
    </location>
</feature>
<feature type="glycosylation site" description="N-linked (GlcNAc...) asparagine" evidence="3">
    <location>
        <position position="448"/>
    </location>
</feature>
<feature type="disulfide bond" evidence="2">
    <location>
        <begin position="46"/>
        <end position="102"/>
    </location>
</feature>
<feature type="disulfide bond" evidence="2">
    <location>
        <begin position="152"/>
        <end position="166"/>
    </location>
</feature>
<feature type="disulfide bond" evidence="2">
    <location>
        <begin position="439"/>
        <end position="451"/>
    </location>
</feature>
<comment type="catalytic activity">
    <reaction evidence="1">
        <text>Endohydrolysis of (1-&gt;4)-alpha-D-glucosidic linkages in polysaccharides containing three or more (1-&gt;4)-alpha-linked D-glucose units.</text>
        <dbReference type="EC" id="3.2.1.1"/>
    </reaction>
</comment>
<comment type="cofactor">
    <cofactor evidence="2">
        <name>Ca(2+)</name>
        <dbReference type="ChEBI" id="CHEBI:29108"/>
    </cofactor>
    <text evidence="2">Binds 1 Ca(2+) ion per subunit.</text>
</comment>
<comment type="cofactor">
    <cofactor evidence="2">
        <name>chloride</name>
        <dbReference type="ChEBI" id="CHEBI:17996"/>
    </cofactor>
    <text evidence="2">Binds 1 Cl(-) ion per subunit.</text>
</comment>
<comment type="subunit">
    <text evidence="2">Monomer.</text>
</comment>
<comment type="subcellular location">
    <subcellularLocation>
        <location evidence="5">Secreted</location>
    </subcellularLocation>
</comment>
<comment type="tissue specificity">
    <text evidence="4">Expressed in larval and adult gut.</text>
</comment>
<comment type="developmental stage">
    <text evidence="4">Larvae and adult, but not eggs.</text>
</comment>
<comment type="similarity">
    <text evidence="3">Belongs to the glycosyl hydrolase 13 family.</text>
</comment>
<reference evidence="5 6" key="1">
    <citation type="journal article" date="1999" name="Insect Biochem. Mol. Biol.">
        <title>Molecular cloning of cDNAs encoding a range of digestive enzymes from a phytophagous beetle, Phaedon cochleariae.</title>
        <authorList>
            <person name="Girard C."/>
            <person name="Jouanin L."/>
        </authorList>
    </citation>
    <scope>NUCLEOTIDE SEQUENCE [MRNA]</scope>
    <scope>TISSUE SPECIFICITY</scope>
    <scope>DEVELOPMENTAL STAGE</scope>
    <source>
        <tissue evidence="4">Larval gut</tissue>
    </source>
</reference>
<evidence type="ECO:0000250" key="1">
    <source>
        <dbReference type="UniProtKB" id="P04746"/>
    </source>
</evidence>
<evidence type="ECO:0000250" key="2">
    <source>
        <dbReference type="UniProtKB" id="P56634"/>
    </source>
</evidence>
<evidence type="ECO:0000255" key="3"/>
<evidence type="ECO:0000269" key="4">
    <source>
    </source>
</evidence>
<evidence type="ECO:0000305" key="5"/>
<evidence type="ECO:0000312" key="6">
    <source>
        <dbReference type="EMBL" id="CAA76926.1"/>
    </source>
</evidence>
<dbReference type="EC" id="3.2.1.1" evidence="1"/>
<dbReference type="EMBL" id="Y17902">
    <property type="protein sequence ID" value="CAA76926.1"/>
    <property type="molecule type" value="mRNA"/>
</dbReference>
<dbReference type="SMR" id="O97396"/>
<dbReference type="CAZy" id="GH13">
    <property type="family name" value="Glycoside Hydrolase Family 13"/>
</dbReference>
<dbReference type="OrthoDB" id="550577at2759"/>
<dbReference type="GO" id="GO:0005576">
    <property type="term" value="C:extracellular region"/>
    <property type="evidence" value="ECO:0007669"/>
    <property type="project" value="UniProtKB-SubCell"/>
</dbReference>
<dbReference type="GO" id="GO:0004556">
    <property type="term" value="F:alpha-amylase activity"/>
    <property type="evidence" value="ECO:0007669"/>
    <property type="project" value="UniProtKB-EC"/>
</dbReference>
<dbReference type="GO" id="GO:0046872">
    <property type="term" value="F:metal ion binding"/>
    <property type="evidence" value="ECO:0007669"/>
    <property type="project" value="UniProtKB-KW"/>
</dbReference>
<dbReference type="GO" id="GO:0005975">
    <property type="term" value="P:carbohydrate metabolic process"/>
    <property type="evidence" value="ECO:0007669"/>
    <property type="project" value="InterPro"/>
</dbReference>
<dbReference type="GO" id="GO:0007586">
    <property type="term" value="P:digestion"/>
    <property type="evidence" value="ECO:0007669"/>
    <property type="project" value="UniProtKB-KW"/>
</dbReference>
<dbReference type="CDD" id="cd11317">
    <property type="entry name" value="AmyAc_bac_euk_AmyA"/>
    <property type="match status" value="1"/>
</dbReference>
<dbReference type="Gene3D" id="3.20.20.80">
    <property type="entry name" value="Glycosidases"/>
    <property type="match status" value="1"/>
</dbReference>
<dbReference type="Gene3D" id="2.60.40.1180">
    <property type="entry name" value="Golgi alpha-mannosidase II"/>
    <property type="match status" value="1"/>
</dbReference>
<dbReference type="InterPro" id="IPR006048">
    <property type="entry name" value="A-amylase/branching_C"/>
</dbReference>
<dbReference type="InterPro" id="IPR031319">
    <property type="entry name" value="A-amylase_C"/>
</dbReference>
<dbReference type="InterPro" id="IPR006046">
    <property type="entry name" value="Alpha_amylase"/>
</dbReference>
<dbReference type="InterPro" id="IPR006047">
    <property type="entry name" value="Glyco_hydro_13_cat_dom"/>
</dbReference>
<dbReference type="InterPro" id="IPR013780">
    <property type="entry name" value="Glyco_hydro_b"/>
</dbReference>
<dbReference type="InterPro" id="IPR017853">
    <property type="entry name" value="Glycoside_hydrolase_SF"/>
</dbReference>
<dbReference type="PANTHER" id="PTHR43447">
    <property type="entry name" value="ALPHA-AMYLASE"/>
    <property type="match status" value="1"/>
</dbReference>
<dbReference type="Pfam" id="PF00128">
    <property type="entry name" value="Alpha-amylase"/>
    <property type="match status" value="1"/>
</dbReference>
<dbReference type="Pfam" id="PF02806">
    <property type="entry name" value="Alpha-amylase_C"/>
    <property type="match status" value="1"/>
</dbReference>
<dbReference type="PRINTS" id="PR00110">
    <property type="entry name" value="ALPHAAMYLASE"/>
</dbReference>
<dbReference type="SMART" id="SM00642">
    <property type="entry name" value="Aamy"/>
    <property type="match status" value="1"/>
</dbReference>
<dbReference type="SMART" id="SM00632">
    <property type="entry name" value="Aamy_C"/>
    <property type="match status" value="1"/>
</dbReference>
<dbReference type="SUPFAM" id="SSF51445">
    <property type="entry name" value="(Trans)glycosidases"/>
    <property type="match status" value="1"/>
</dbReference>
<dbReference type="SUPFAM" id="SSF51011">
    <property type="entry name" value="Glycosyl hydrolase domain"/>
    <property type="match status" value="1"/>
</dbReference>
<sequence length="485" mass="52832">MFLTSVLILCSLAALSLGQKNNNFAPGRNTIVHLFEWHWDDIANECENFLGPKGFAGVQISPPAENTVIGDRPWWERYQPISYALNTRSGDESALASMIRRCNNAGVRIYVDAVFNHMSATSGIGTGGSSCDVEPSASPAVPYGSGDFHGRCTSNNYQDPNNIRNCWLSGLPDLDQSKDYVRDKILEYLNHLVDLGVAGFRVDAAKHMWPADLQVIYGRVKDLNTDHGFSQGSRPFFYQEVIDLGGEGVSKNEYTGFGTVLEFKYGTELGNAFQGNNALHNLENWGPAWGLLEGTDAVVFIDNHDNQRTGSGAILTYKNPRPYKMAIGFMLAHPYGTTRIMSSFSFDYNDQGPPTQGPGFNSVRNLHQWVGGANTGWRQILRVMVGFRNAVDGTSISNWWSDGNQQIAFGRGDKGFVAFTLAGDINGNLQTSLPAGSYCDIVSGKLENGSCTGKTVNVDGNGQAYITLSSGEDDGFLAIHVGAKV</sequence>
<accession>O97396</accession>
<accession>P81519</accession>